<keyword id="KW-0479">Metal-binding</keyword>
<keyword id="KW-0687">Ribonucleoprotein</keyword>
<keyword id="KW-0689">Ribosomal protein</keyword>
<keyword id="KW-0694">RNA-binding</keyword>
<keyword id="KW-0699">rRNA-binding</keyword>
<keyword id="KW-0862">Zinc</keyword>
<sequence length="71" mass="8142">MKDNIHPTVYKATMNCACGYQAEVLSTKGENVHVEICSNCHPFYTGKQRLIDTAGRIDRFRKKYAKFGEEK</sequence>
<reference key="1">
    <citation type="journal article" date="2009" name="Environ. Microbiol.">
        <title>Contribution of mobile genetic elements to Desulfovibrio vulgaris genome plasticity.</title>
        <authorList>
            <person name="Walker C.B."/>
            <person name="Stolyar S."/>
            <person name="Chivian D."/>
            <person name="Pinel N."/>
            <person name="Gabster J.A."/>
            <person name="Dehal P.S."/>
            <person name="He Z."/>
            <person name="Yang Z.K."/>
            <person name="Yen H.C."/>
            <person name="Zhou J."/>
            <person name="Wall J.D."/>
            <person name="Hazen T.C."/>
            <person name="Arkin A.P."/>
            <person name="Stahl D.A."/>
        </authorList>
    </citation>
    <scope>NUCLEOTIDE SEQUENCE [LARGE SCALE GENOMIC DNA]</scope>
    <source>
        <strain>DP4</strain>
    </source>
</reference>
<protein>
    <recommendedName>
        <fullName evidence="1">Large ribosomal subunit protein bL31</fullName>
    </recommendedName>
    <alternativeName>
        <fullName evidence="2">50S ribosomal protein L31</fullName>
    </alternativeName>
</protein>
<gene>
    <name evidence="1" type="primary">rpmE</name>
    <name type="ordered locus">Dvul_0453</name>
</gene>
<evidence type="ECO:0000255" key="1">
    <source>
        <dbReference type="HAMAP-Rule" id="MF_00501"/>
    </source>
</evidence>
<evidence type="ECO:0000305" key="2"/>
<proteinExistence type="inferred from homology"/>
<name>RL31_NITV4</name>
<accession>A1VAL0</accession>
<feature type="chain" id="PRO_1000126608" description="Large ribosomal subunit protein bL31">
    <location>
        <begin position="1"/>
        <end position="71"/>
    </location>
</feature>
<feature type="binding site" evidence="1">
    <location>
        <position position="16"/>
    </location>
    <ligand>
        <name>Zn(2+)</name>
        <dbReference type="ChEBI" id="CHEBI:29105"/>
    </ligand>
</feature>
<feature type="binding site" evidence="1">
    <location>
        <position position="18"/>
    </location>
    <ligand>
        <name>Zn(2+)</name>
        <dbReference type="ChEBI" id="CHEBI:29105"/>
    </ligand>
</feature>
<feature type="binding site" evidence="1">
    <location>
        <position position="37"/>
    </location>
    <ligand>
        <name>Zn(2+)</name>
        <dbReference type="ChEBI" id="CHEBI:29105"/>
    </ligand>
</feature>
<feature type="binding site" evidence="1">
    <location>
        <position position="40"/>
    </location>
    <ligand>
        <name>Zn(2+)</name>
        <dbReference type="ChEBI" id="CHEBI:29105"/>
    </ligand>
</feature>
<dbReference type="EMBL" id="CP000527">
    <property type="protein sequence ID" value="ABM27476.1"/>
    <property type="molecule type" value="Genomic_DNA"/>
</dbReference>
<dbReference type="RefSeq" id="WP_010940172.1">
    <property type="nucleotide sequence ID" value="NC_008751.1"/>
</dbReference>
<dbReference type="SMR" id="A1VAL0"/>
<dbReference type="KEGG" id="dvl:Dvul_0453"/>
<dbReference type="HOGENOM" id="CLU_114306_4_0_7"/>
<dbReference type="Proteomes" id="UP000009173">
    <property type="component" value="Chromosome"/>
</dbReference>
<dbReference type="GO" id="GO:1990904">
    <property type="term" value="C:ribonucleoprotein complex"/>
    <property type="evidence" value="ECO:0007669"/>
    <property type="project" value="UniProtKB-KW"/>
</dbReference>
<dbReference type="GO" id="GO:0005840">
    <property type="term" value="C:ribosome"/>
    <property type="evidence" value="ECO:0007669"/>
    <property type="project" value="UniProtKB-KW"/>
</dbReference>
<dbReference type="GO" id="GO:0046872">
    <property type="term" value="F:metal ion binding"/>
    <property type="evidence" value="ECO:0007669"/>
    <property type="project" value="UniProtKB-KW"/>
</dbReference>
<dbReference type="GO" id="GO:0019843">
    <property type="term" value="F:rRNA binding"/>
    <property type="evidence" value="ECO:0007669"/>
    <property type="project" value="UniProtKB-KW"/>
</dbReference>
<dbReference type="GO" id="GO:0003735">
    <property type="term" value="F:structural constituent of ribosome"/>
    <property type="evidence" value="ECO:0007669"/>
    <property type="project" value="InterPro"/>
</dbReference>
<dbReference type="GO" id="GO:0006412">
    <property type="term" value="P:translation"/>
    <property type="evidence" value="ECO:0007669"/>
    <property type="project" value="UniProtKB-UniRule"/>
</dbReference>
<dbReference type="Gene3D" id="4.10.830.30">
    <property type="entry name" value="Ribosomal protein L31"/>
    <property type="match status" value="1"/>
</dbReference>
<dbReference type="HAMAP" id="MF_00501">
    <property type="entry name" value="Ribosomal_bL31_1"/>
    <property type="match status" value="1"/>
</dbReference>
<dbReference type="InterPro" id="IPR034704">
    <property type="entry name" value="Ribosomal_bL28/bL31-like_sf"/>
</dbReference>
<dbReference type="InterPro" id="IPR002150">
    <property type="entry name" value="Ribosomal_bL31"/>
</dbReference>
<dbReference type="InterPro" id="IPR027491">
    <property type="entry name" value="Ribosomal_bL31_A"/>
</dbReference>
<dbReference type="InterPro" id="IPR042105">
    <property type="entry name" value="Ribosomal_bL31_sf"/>
</dbReference>
<dbReference type="NCBIfam" id="TIGR00105">
    <property type="entry name" value="L31"/>
    <property type="match status" value="1"/>
</dbReference>
<dbReference type="NCBIfam" id="NF000612">
    <property type="entry name" value="PRK00019.1"/>
    <property type="match status" value="1"/>
</dbReference>
<dbReference type="NCBIfam" id="NF001809">
    <property type="entry name" value="PRK00528.1"/>
    <property type="match status" value="1"/>
</dbReference>
<dbReference type="PANTHER" id="PTHR33280">
    <property type="entry name" value="50S RIBOSOMAL PROTEIN L31, CHLOROPLASTIC"/>
    <property type="match status" value="1"/>
</dbReference>
<dbReference type="PANTHER" id="PTHR33280:SF6">
    <property type="entry name" value="LARGE RIBOSOMAL SUBUNIT PROTEIN BL31A"/>
    <property type="match status" value="1"/>
</dbReference>
<dbReference type="Pfam" id="PF01197">
    <property type="entry name" value="Ribosomal_L31"/>
    <property type="match status" value="1"/>
</dbReference>
<dbReference type="PRINTS" id="PR01249">
    <property type="entry name" value="RIBOSOMALL31"/>
</dbReference>
<dbReference type="SUPFAM" id="SSF143800">
    <property type="entry name" value="L28p-like"/>
    <property type="match status" value="1"/>
</dbReference>
<dbReference type="PROSITE" id="PS01143">
    <property type="entry name" value="RIBOSOMAL_L31"/>
    <property type="match status" value="1"/>
</dbReference>
<comment type="function">
    <text evidence="1">Binds the 23S rRNA.</text>
</comment>
<comment type="cofactor">
    <cofactor evidence="1">
        <name>Zn(2+)</name>
        <dbReference type="ChEBI" id="CHEBI:29105"/>
    </cofactor>
    <text evidence="1">Binds 1 zinc ion per subunit.</text>
</comment>
<comment type="subunit">
    <text evidence="1">Part of the 50S ribosomal subunit.</text>
</comment>
<comment type="similarity">
    <text evidence="1">Belongs to the bacterial ribosomal protein bL31 family. Type A subfamily.</text>
</comment>
<organism>
    <name type="scientific">Nitratidesulfovibrio vulgaris (strain DP4)</name>
    <name type="common">Desulfovibrio vulgaris</name>
    <dbReference type="NCBI Taxonomy" id="391774"/>
    <lineage>
        <taxon>Bacteria</taxon>
        <taxon>Pseudomonadati</taxon>
        <taxon>Thermodesulfobacteriota</taxon>
        <taxon>Desulfovibrionia</taxon>
        <taxon>Desulfovibrionales</taxon>
        <taxon>Desulfovibrionaceae</taxon>
        <taxon>Nitratidesulfovibrio</taxon>
    </lineage>
</organism>